<organism>
    <name type="scientific">Cupriavidus necator (strain ATCC 17699 / DSM 428 / KCTC 22496 / NCIMB 10442 / H16 / Stanier 337)</name>
    <name type="common">Ralstonia eutropha</name>
    <dbReference type="NCBI Taxonomy" id="381666"/>
    <lineage>
        <taxon>Bacteria</taxon>
        <taxon>Pseudomonadati</taxon>
        <taxon>Pseudomonadota</taxon>
        <taxon>Betaproteobacteria</taxon>
        <taxon>Burkholderiales</taxon>
        <taxon>Burkholderiaceae</taxon>
        <taxon>Cupriavidus</taxon>
    </lineage>
</organism>
<proteinExistence type="evidence at protein level"/>
<protein>
    <recommendedName>
        <fullName evidence="2">3-hydroxybutyrate-oligomer hydrolase</fullName>
        <shortName evidence="2">3HB-oligomer hydrolase</shortName>
        <ecNumber evidence="1">3.1.1.-</ecNumber>
    </recommendedName>
</protein>
<feature type="chain" id="PRO_0000458268" description="3-hydroxybutyrate-oligomer hydrolase">
    <location>
        <begin position="1"/>
        <end position="293"/>
    </location>
</feature>
<feature type="sequence conflict" description="In Ref. 1; BAD99135." evidence="3" ref="1">
    <original>KL</original>
    <variation>NV</variation>
    <location>
        <begin position="127"/>
        <end position="128"/>
    </location>
</feature>
<feature type="sequence conflict" description="In Ref. 1; BAD99135." evidence="3" ref="1">
    <original>S</original>
    <variation>T</variation>
    <location>
        <position position="229"/>
    </location>
</feature>
<comment type="function">
    <text evidence="1">Catalyzes the degradation of various 3-hydroxybutyrate (3HB) oligomers at a high specific activity and artificial amorphous poly(3-hydroxybutyrate) (PHB) at a lower specific activity. Hydrolyzes the 3HB pentamer most efficiently than the tetramer, trimer and dimer. Does not hydrolyze native PHB granules and semicrystalline PHB. Participates in the mobilization of PHB along with other hydrolases.</text>
</comment>
<comment type="catalytic activity">
    <reaction evidence="1">
        <text>(3R)-hydroxybutanoate pentamer + H2O = (3R)-hydroxybutanoate tetramer + (R)-3-hydroxybutanoate + H(+)</text>
        <dbReference type="Rhea" id="RHEA:76007"/>
        <dbReference type="ChEBI" id="CHEBI:10983"/>
        <dbReference type="ChEBI" id="CHEBI:15377"/>
        <dbReference type="ChEBI" id="CHEBI:15378"/>
        <dbReference type="ChEBI" id="CHEBI:140383"/>
        <dbReference type="ChEBI" id="CHEBI:140384"/>
    </reaction>
    <physiologicalReaction direction="left-to-right" evidence="1">
        <dbReference type="Rhea" id="RHEA:76008"/>
    </physiologicalReaction>
</comment>
<comment type="catalytic activity">
    <reaction evidence="1">
        <text>(3R)-hydroxybutanoate tetramer + H2O = (3R)-hydroxybutanoate trimer + (R)-3-hydroxybutanoate + H(+)</text>
        <dbReference type="Rhea" id="RHEA:76011"/>
        <dbReference type="ChEBI" id="CHEBI:10983"/>
        <dbReference type="ChEBI" id="CHEBI:15377"/>
        <dbReference type="ChEBI" id="CHEBI:15378"/>
        <dbReference type="ChEBI" id="CHEBI:140384"/>
        <dbReference type="ChEBI" id="CHEBI:140385"/>
    </reaction>
    <physiologicalReaction direction="left-to-right" evidence="1">
        <dbReference type="Rhea" id="RHEA:76012"/>
    </physiologicalReaction>
</comment>
<comment type="catalytic activity">
    <reaction evidence="1">
        <text>(3R)-hydroxybutanoate trimer + H2O = (3R)-hydroxybutanoate dimer + (R)-3-hydroxybutanoate + H(+)</text>
        <dbReference type="Rhea" id="RHEA:76015"/>
        <dbReference type="ChEBI" id="CHEBI:10979"/>
        <dbReference type="ChEBI" id="CHEBI:10983"/>
        <dbReference type="ChEBI" id="CHEBI:15377"/>
        <dbReference type="ChEBI" id="CHEBI:15378"/>
        <dbReference type="ChEBI" id="CHEBI:140385"/>
    </reaction>
    <physiologicalReaction direction="left-to-right" evidence="1">
        <dbReference type="Rhea" id="RHEA:76016"/>
    </physiologicalReaction>
</comment>
<comment type="catalytic activity">
    <reaction evidence="1">
        <text>(3R)-hydroxybutanoate dimer + H2O = 2 (R)-3-hydroxybutanoate + H(+)</text>
        <dbReference type="Rhea" id="RHEA:10172"/>
        <dbReference type="ChEBI" id="CHEBI:10979"/>
        <dbReference type="ChEBI" id="CHEBI:10983"/>
        <dbReference type="ChEBI" id="CHEBI:15377"/>
        <dbReference type="ChEBI" id="CHEBI:15378"/>
    </reaction>
    <physiologicalReaction direction="left-to-right" evidence="1">
        <dbReference type="Rhea" id="RHEA:10173"/>
    </physiologicalReaction>
</comment>
<comment type="catalytic activity">
    <reaction evidence="1">
        <text>[(3R)-hydroxybutanoate](n) + H2O = [(3R)-hydroxybutanoate](n-1) + (R)-3-hydroxybutanoate + H(+)</text>
        <dbReference type="Rhea" id="RHEA:11248"/>
        <dbReference type="Rhea" id="RHEA-COMP:14464"/>
        <dbReference type="Rhea" id="RHEA-COMP:14518"/>
        <dbReference type="ChEBI" id="CHEBI:8298"/>
        <dbReference type="ChEBI" id="CHEBI:10983"/>
        <dbReference type="ChEBI" id="CHEBI:15377"/>
        <dbReference type="ChEBI" id="CHEBI:15378"/>
    </reaction>
    <physiologicalReaction direction="left-to-right" evidence="1">
        <dbReference type="Rhea" id="RHEA:11249"/>
    </physiologicalReaction>
</comment>
<comment type="subcellular location">
    <subcellularLocation>
        <location evidence="1">Cytoplasm</location>
    </subcellularLocation>
    <text evidence="1">Is present mainly in the cytosolic fraction but a small amount is also present in the poly(3-hydroxybutyrate) granules.</text>
</comment>
<comment type="induction">
    <text evidence="1">Seems to be expressed constitutively both in the N-rich medium (cell growth conditions) and in the MSF medium (PHB accumulation conditions).</text>
</comment>
<comment type="disruption phenotype">
    <text evidence="1">Deletion of this gene enhances the deposition of PHB in the logarithmic phase in nutrient-rich medium.</text>
</comment>
<comment type="miscellaneous">
    <text evidence="1">Poly(3-hydroxybutyrate) (PHB), a homopolymer of (R)-3-hydroxybutyrate, is a storage material produced by some bacteria, that is used as sources of carbon and energy.</text>
</comment>
<comment type="similarity">
    <text evidence="3">Belongs to the AB hydrolase superfamily.</text>
</comment>
<name>3HBOH_CUPNH</name>
<dbReference type="EC" id="3.1.1.-" evidence="1"/>
<dbReference type="EMBL" id="AB180691">
    <property type="protein sequence ID" value="BAD99135.1"/>
    <property type="molecule type" value="Genomic_DNA"/>
</dbReference>
<dbReference type="EMBL" id="AM260479">
    <property type="protein sequence ID" value="CAJ92475.1"/>
    <property type="molecule type" value="Genomic_DNA"/>
</dbReference>
<dbReference type="RefSeq" id="WP_011615004.1">
    <property type="nucleotide sequence ID" value="NC_008313.1"/>
</dbReference>
<dbReference type="SMR" id="Q4W8C9"/>
<dbReference type="STRING" id="381666.H16_A1335"/>
<dbReference type="ESTHER" id="alceu-q4w8c9">
    <property type="family name" value="6_AlphaBeta_hydrolase"/>
</dbReference>
<dbReference type="KEGG" id="reh:H16_A1335"/>
<dbReference type="eggNOG" id="COG0596">
    <property type="taxonomic scope" value="Bacteria"/>
</dbReference>
<dbReference type="OrthoDB" id="8543939at2"/>
<dbReference type="Proteomes" id="UP000008210">
    <property type="component" value="Chromosome 1"/>
</dbReference>
<dbReference type="GO" id="GO:0005737">
    <property type="term" value="C:cytoplasm"/>
    <property type="evidence" value="ECO:0007669"/>
    <property type="project" value="UniProtKB-SubCell"/>
</dbReference>
<dbReference type="GO" id="GO:0016020">
    <property type="term" value="C:membrane"/>
    <property type="evidence" value="ECO:0007669"/>
    <property type="project" value="TreeGrafter"/>
</dbReference>
<dbReference type="GO" id="GO:0016787">
    <property type="term" value="F:hydrolase activity"/>
    <property type="evidence" value="ECO:0007669"/>
    <property type="project" value="UniProtKB-KW"/>
</dbReference>
<dbReference type="Gene3D" id="3.40.50.1820">
    <property type="entry name" value="alpha/beta hydrolase"/>
    <property type="match status" value="1"/>
</dbReference>
<dbReference type="InterPro" id="IPR000073">
    <property type="entry name" value="AB_hydrolase_1"/>
</dbReference>
<dbReference type="InterPro" id="IPR029058">
    <property type="entry name" value="AB_hydrolase_fold"/>
</dbReference>
<dbReference type="InterPro" id="IPR050266">
    <property type="entry name" value="AB_hydrolase_sf"/>
</dbReference>
<dbReference type="PANTHER" id="PTHR43798:SF33">
    <property type="entry name" value="HYDROLASE, PUTATIVE (AFU_ORTHOLOGUE AFUA_2G14860)-RELATED"/>
    <property type="match status" value="1"/>
</dbReference>
<dbReference type="PANTHER" id="PTHR43798">
    <property type="entry name" value="MONOACYLGLYCEROL LIPASE"/>
    <property type="match status" value="1"/>
</dbReference>
<dbReference type="Pfam" id="PF12697">
    <property type="entry name" value="Abhydrolase_6"/>
    <property type="match status" value="1"/>
</dbReference>
<dbReference type="SUPFAM" id="SSF53474">
    <property type="entry name" value="alpha/beta-Hydrolases"/>
    <property type="match status" value="1"/>
</dbReference>
<accession>Q4W8C9</accession>
<accession>Q0KBZ6</accession>
<gene>
    <name evidence="2" type="primary">phaZc</name>
    <name evidence="5" type="synonym">phaY2</name>
    <name evidence="4" type="synonym">phaZ3</name>
    <name evidence="5" type="ordered locus">H16_A1335</name>
</gene>
<sequence>MSASPRLGFVQCISPAGLHRMAYHEWGDPANPRVLVCAHGLTRTGRDFDTVASALCGDYRVVCPDVAGRGRSEWLADANGYVVPQYVSDMVTLIARLNVEKVDWFGTSMGGLIGMGLAGLPKSPVRKLLLNDVGPKLAPSAVERIGAYLGLPVRFKTFEEGLAYLQTISASFGRHTPEQWRELNAAILKPVQGTDGLEWGLHYDPQLAVPFRKSTPEAIAAGEAALWRSFEAIEGPVLVVRGAQSDLLLRETVAEMVARGKHVSSVEVPDVGHAPTFVDPAQIAIAPQFFTGA</sequence>
<keyword id="KW-0963">Cytoplasm</keyword>
<keyword id="KW-0378">Hydrolase</keyword>
<keyword id="KW-1185">Reference proteome</keyword>
<reference key="1">
    <citation type="journal article" date="2005" name="J. Bacteriol.">
        <title>Novel intracellular 3-hydroxybutyrate-oligomer hydrolase in Wautersia eutropha H16.</title>
        <authorList>
            <person name="Kobayashi T."/>
            <person name="Uchino K."/>
            <person name="Abe T."/>
            <person name="Yamazaki Y."/>
            <person name="Saito T."/>
        </authorList>
    </citation>
    <scope>NUCLEOTIDE SEQUENCE [GENOMIC DNA]</scope>
    <scope>FUNCTION</scope>
    <scope>CATALYTIC ACTIVITY</scope>
    <scope>SUBSTRATE SPECIFICITY</scope>
    <scope>SUBCELLULAR LOCATION</scope>
    <scope>INDUCTION</scope>
    <scope>DISRUPTION PHENOTYPE</scope>
    <source>
        <strain>ATCC 17699 / DSM 428 / KCTC 22496 / NCIMB 10442 / H16 / Stanier 337</strain>
    </source>
</reference>
<reference key="2">
    <citation type="journal article" date="2006" name="Nat. Biotechnol.">
        <title>Genome sequence of the bioplastic-producing 'Knallgas' bacterium Ralstonia eutropha H16.</title>
        <authorList>
            <person name="Pohlmann A."/>
            <person name="Fricke W.F."/>
            <person name="Reinecke F."/>
            <person name="Kusian B."/>
            <person name="Liesegang H."/>
            <person name="Cramm R."/>
            <person name="Eitinger T."/>
            <person name="Ewering C."/>
            <person name="Poetter M."/>
            <person name="Schwartz E."/>
            <person name="Strittmatter A."/>
            <person name="Voss I."/>
            <person name="Gottschalk G."/>
            <person name="Steinbuechel A."/>
            <person name="Friedrich B."/>
            <person name="Bowien B."/>
        </authorList>
    </citation>
    <scope>NUCLEOTIDE SEQUENCE [LARGE SCALE GENOMIC DNA]</scope>
    <source>
        <strain>ATCC 17699 / DSM 428 / KCTC 22496 / NCIMB 10442 / H16 / Stanier 337</strain>
    </source>
</reference>
<evidence type="ECO:0000269" key="1">
    <source>
    </source>
</evidence>
<evidence type="ECO:0000303" key="2">
    <source>
    </source>
</evidence>
<evidence type="ECO:0000305" key="3"/>
<evidence type="ECO:0000312" key="4">
    <source>
        <dbReference type="EMBL" id="BAD99135.1"/>
    </source>
</evidence>
<evidence type="ECO:0000312" key="5">
    <source>
        <dbReference type="EMBL" id="CAJ92475.1"/>
    </source>
</evidence>